<feature type="chain" id="PRO_0000213407" description="UDP-galactose transporter homolog 1">
    <location>
        <begin position="1"/>
        <end position="412"/>
    </location>
</feature>
<feature type="transmembrane region" description="Helical" evidence="2">
    <location>
        <begin position="3"/>
        <end position="23"/>
    </location>
</feature>
<feature type="transmembrane region" description="Helical" evidence="2">
    <location>
        <begin position="58"/>
        <end position="78"/>
    </location>
</feature>
<feature type="transmembrane region" description="Helical" evidence="2">
    <location>
        <begin position="139"/>
        <end position="159"/>
    </location>
</feature>
<feature type="transmembrane region" description="Helical" evidence="2">
    <location>
        <begin position="197"/>
        <end position="217"/>
    </location>
</feature>
<feature type="transmembrane region" description="Helical" evidence="2">
    <location>
        <begin position="222"/>
        <end position="242"/>
    </location>
</feature>
<feature type="transmembrane region" description="Helical" evidence="2">
    <location>
        <begin position="262"/>
        <end position="282"/>
    </location>
</feature>
<feature type="transmembrane region" description="Helical" evidence="2">
    <location>
        <begin position="325"/>
        <end position="345"/>
    </location>
</feature>
<feature type="transmembrane region" description="Helical" evidence="2">
    <location>
        <begin position="355"/>
        <end position="375"/>
    </location>
</feature>
<feature type="transmembrane region" description="Helical" evidence="2">
    <location>
        <begin position="379"/>
        <end position="399"/>
    </location>
</feature>
<feature type="region of interest" description="Disordered" evidence="3">
    <location>
        <begin position="31"/>
        <end position="51"/>
    </location>
</feature>
<feature type="glycosylation site" description="N-linked (GlcNAc...) asparagine" evidence="2">
    <location>
        <position position="244"/>
    </location>
</feature>
<sequence length="412" mass="44919">MGVLRLAVCISGVYAAFLLWAIAQERLSKPFPSVHPHPHQQPHSPSDPPPGDKFPSPLFLNFAQALASSLSALCYLSFKAWRDGWKGRGLGQLLGLKEVFGKSQTALNGDAKANKKESELNEKTKEVVEKAPKPPKKSLLALLVQVSVFQTIASPIGFLALRHISYPTMVLGKSCKLIPVLLLNVLLYRRKFSPHKYIVVALVTVGISMFMLFAETSKKKKGGSDSMWGLVLLLVNLLIDGLTNSTQDQIFSSYPSYTGQQMMFTMALTTQIILLPLLVLPLPTNPISLLAHLPPPFGSSVPTSTLSFSPPAALESISFLLSHPSALAPLFAYALLGGLGQLFIFETIQHFGSLTLVMVTVTRKLFTMLLSVVVFEHRLTKGQWLGVGVVFAGIGVEAGMKRKDVMKKAKKD</sequence>
<reference key="1">
    <citation type="journal article" date="2005" name="Science">
        <title>The genome of the basidiomycetous yeast and human pathogen Cryptococcus neoformans.</title>
        <authorList>
            <person name="Loftus B.J."/>
            <person name="Fung E."/>
            <person name="Roncaglia P."/>
            <person name="Rowley D."/>
            <person name="Amedeo P."/>
            <person name="Bruno D."/>
            <person name="Vamathevan J."/>
            <person name="Miranda M."/>
            <person name="Anderson I.J."/>
            <person name="Fraser J.A."/>
            <person name="Allen J.E."/>
            <person name="Bosdet I.E."/>
            <person name="Brent M.R."/>
            <person name="Chiu R."/>
            <person name="Doering T.L."/>
            <person name="Donlin M.J."/>
            <person name="D'Souza C.A."/>
            <person name="Fox D.S."/>
            <person name="Grinberg V."/>
            <person name="Fu J."/>
            <person name="Fukushima M."/>
            <person name="Haas B.J."/>
            <person name="Huang J.C."/>
            <person name="Janbon G."/>
            <person name="Jones S.J.M."/>
            <person name="Koo H.L."/>
            <person name="Krzywinski M.I."/>
            <person name="Kwon-Chung K.J."/>
            <person name="Lengeler K.B."/>
            <person name="Maiti R."/>
            <person name="Marra M.A."/>
            <person name="Marra R.E."/>
            <person name="Mathewson C.A."/>
            <person name="Mitchell T.G."/>
            <person name="Pertea M."/>
            <person name="Riggs F.R."/>
            <person name="Salzberg S.L."/>
            <person name="Schein J.E."/>
            <person name="Shvartsbeyn A."/>
            <person name="Shin H."/>
            <person name="Shumway M."/>
            <person name="Specht C.A."/>
            <person name="Suh B.B."/>
            <person name="Tenney A."/>
            <person name="Utterback T.R."/>
            <person name="Wickes B.L."/>
            <person name="Wortman J.R."/>
            <person name="Wye N.H."/>
            <person name="Kronstad J.W."/>
            <person name="Lodge J.K."/>
            <person name="Heitman J."/>
            <person name="Davis R.W."/>
            <person name="Fraser C.M."/>
            <person name="Hyman R.W."/>
        </authorList>
    </citation>
    <scope>NUCLEOTIDE SEQUENCE [LARGE SCALE GENOMIC DNA]</scope>
    <source>
        <strain>JEC21 / ATCC MYA-565</strain>
    </source>
</reference>
<proteinExistence type="inferred from homology"/>
<protein>
    <recommendedName>
        <fullName>UDP-galactose transporter homolog 1</fullName>
    </recommendedName>
</protein>
<evidence type="ECO:0000250" key="1"/>
<evidence type="ECO:0000255" key="2"/>
<evidence type="ECO:0000256" key="3">
    <source>
        <dbReference type="SAM" id="MobiDB-lite"/>
    </source>
</evidence>
<evidence type="ECO:0000305" key="4"/>
<organism>
    <name type="scientific">Cryptococcus neoformans var. neoformans serotype D (strain JEC21 / ATCC MYA-565)</name>
    <name type="common">Filobasidiella neoformans</name>
    <dbReference type="NCBI Taxonomy" id="214684"/>
    <lineage>
        <taxon>Eukaryota</taxon>
        <taxon>Fungi</taxon>
        <taxon>Dikarya</taxon>
        <taxon>Basidiomycota</taxon>
        <taxon>Agaricomycotina</taxon>
        <taxon>Tremellomycetes</taxon>
        <taxon>Tremellales</taxon>
        <taxon>Cryptococcaceae</taxon>
        <taxon>Cryptococcus</taxon>
        <taxon>Cryptococcus neoformans species complex</taxon>
    </lineage>
</organism>
<name>HUT1_CRYNJ</name>
<gene>
    <name type="primary">HUT1-A</name>
    <name type="ordered locus">CNL03760</name>
</gene>
<gene>
    <name type="primary">HUT1-B</name>
    <name type="ordered locus">CNH03760</name>
</gene>
<keyword id="KW-0256">Endoplasmic reticulum</keyword>
<keyword id="KW-0325">Glycoprotein</keyword>
<keyword id="KW-0472">Membrane</keyword>
<keyword id="KW-1185">Reference proteome</keyword>
<keyword id="KW-0762">Sugar transport</keyword>
<keyword id="KW-0812">Transmembrane</keyword>
<keyword id="KW-1133">Transmembrane helix</keyword>
<keyword id="KW-0813">Transport</keyword>
<comment type="function">
    <text evidence="1">May be involved in specific transport of UDP-Gal from the cytosol to the Golgi lumen. Involved in the maintenance of optimal conditions for the folding of secretory pathway proteins in the endoplasmic reticulum (By similarity).</text>
</comment>
<comment type="subcellular location">
    <subcellularLocation>
        <location evidence="1">Endoplasmic reticulum membrane</location>
        <topology evidence="1">Multi-pass membrane protein</topology>
    </subcellularLocation>
</comment>
<comment type="miscellaneous">
    <text>There are two genes coding for HUT1 in strain JEC21, due to a translocation and segmental duplication on chromosomes 8 and 12.</text>
</comment>
<comment type="similarity">
    <text evidence="4">Belongs to the nucleotide-sugar transporter family. SLC35B subfamily.</text>
</comment>
<accession>P0CP32</accession>
<accession>Q55LQ9</accession>
<accession>Q5K915</accession>
<dbReference type="EMBL" id="AE017352">
    <property type="protein sequence ID" value="AAW46420.1"/>
    <property type="molecule type" value="Genomic_DNA"/>
</dbReference>
<dbReference type="EMBL" id="AE017348">
    <property type="protein sequence ID" value="AAW45229.1"/>
    <property type="molecule type" value="Genomic_DNA"/>
</dbReference>
<dbReference type="RefSeq" id="XP_567937.1">
    <property type="nucleotide sequence ID" value="XM_567937.1"/>
</dbReference>
<dbReference type="RefSeq" id="XP_572536.1">
    <property type="nucleotide sequence ID" value="XM_572536.1"/>
</dbReference>
<dbReference type="FunCoup" id="P0CP32">
    <property type="interactions" value="375"/>
</dbReference>
<dbReference type="STRING" id="214684.P0CP32"/>
<dbReference type="GlyCosmos" id="P0CP32">
    <property type="glycosylation" value="1 site, No reported glycans"/>
</dbReference>
<dbReference type="PaxDb" id="214684-P0CP32"/>
<dbReference type="EnsemblFungi" id="AAW45229">
    <property type="protein sequence ID" value="AAW45229"/>
    <property type="gene ID" value="CNH03760"/>
</dbReference>
<dbReference type="EnsemblFungi" id="AAW46420">
    <property type="protein sequence ID" value="AAW46420"/>
    <property type="gene ID" value="CNL03760"/>
</dbReference>
<dbReference type="GeneID" id="3255035"/>
<dbReference type="GeneID" id="3259191"/>
<dbReference type="KEGG" id="cne:CNH03760"/>
<dbReference type="KEGG" id="cne:CNL03760"/>
<dbReference type="VEuPathDB" id="FungiDB:CNH03760"/>
<dbReference type="VEuPathDB" id="FungiDB:CNL03760"/>
<dbReference type="eggNOG" id="KOG1581">
    <property type="taxonomic scope" value="Eukaryota"/>
</dbReference>
<dbReference type="HOGENOM" id="CLU_036019_0_0_1"/>
<dbReference type="InParanoid" id="P0CP32"/>
<dbReference type="OMA" id="YLQCSAF"/>
<dbReference type="OrthoDB" id="1601at2759"/>
<dbReference type="Proteomes" id="UP000002149">
    <property type="component" value="Chromosome 12"/>
</dbReference>
<dbReference type="Proteomes" id="UP000002149">
    <property type="component" value="Chromosome 8"/>
</dbReference>
<dbReference type="GO" id="GO:0005789">
    <property type="term" value="C:endoplasmic reticulum membrane"/>
    <property type="evidence" value="ECO:0000318"/>
    <property type="project" value="GO_Central"/>
</dbReference>
<dbReference type="GO" id="GO:0000139">
    <property type="term" value="C:Golgi membrane"/>
    <property type="evidence" value="ECO:0000318"/>
    <property type="project" value="GO_Central"/>
</dbReference>
<dbReference type="GO" id="GO:0005459">
    <property type="term" value="F:UDP-galactose transmembrane transporter activity"/>
    <property type="evidence" value="ECO:0000318"/>
    <property type="project" value="GO_Central"/>
</dbReference>
<dbReference type="GO" id="GO:0005460">
    <property type="term" value="F:UDP-glucose transmembrane transporter activity"/>
    <property type="evidence" value="ECO:0000318"/>
    <property type="project" value="GO_Central"/>
</dbReference>
<dbReference type="GO" id="GO:0072334">
    <property type="term" value="P:UDP-galactose transmembrane transport"/>
    <property type="evidence" value="ECO:0000318"/>
    <property type="project" value="GO_Central"/>
</dbReference>
<dbReference type="InterPro" id="IPR013657">
    <property type="entry name" value="SCL35B1-4/HUT1"/>
</dbReference>
<dbReference type="PANTHER" id="PTHR10778">
    <property type="entry name" value="SOLUTE CARRIER FAMILY 35 MEMBER B"/>
    <property type="match status" value="1"/>
</dbReference>
<dbReference type="PANTHER" id="PTHR10778:SF10">
    <property type="entry name" value="SOLUTE CARRIER FAMILY 35 MEMBER B1"/>
    <property type="match status" value="1"/>
</dbReference>
<dbReference type="Pfam" id="PF08449">
    <property type="entry name" value="UAA"/>
    <property type="match status" value="1"/>
</dbReference>
<dbReference type="SUPFAM" id="SSF103481">
    <property type="entry name" value="Multidrug resistance efflux transporter EmrE"/>
    <property type="match status" value="2"/>
</dbReference>